<evidence type="ECO:0000255" key="1">
    <source>
        <dbReference type="HAMAP-Rule" id="MF_01849"/>
    </source>
</evidence>
<evidence type="ECO:0000255" key="2">
    <source>
        <dbReference type="PROSITE-ProRule" id="PRU01266"/>
    </source>
</evidence>
<sequence length="353" mass="39889">MKEEIPVLKGKTKKELEEICVSLGLEKYRAAQIYTGIYKSRYTTIDQFTTLSKEVREKLKEHTQYPEIEIGRDLVSKEDGTRKFTFYVGENKEIEAVWIPSGDGGRKTICISSQIGCTLNCKFCATGLLEYKGNLQTWQILDQVLQVERLVGDRATNIVFMGMGEPMHNYFSVMKAAHILRDKDAFGLGALRITISTAGVTTGINRFIENKEPFNFAISLNHPNPNARSSVMDVNDKHPLEKLIDSAKRFTKELDRAITFEYVMIPDVNMGRDNAERLAKIARSVNKCKINVIPLNTDFTGWRRPTDDEVKDFVMHLKAKTTAPILNRRSPGRDINGACGMLALKGIRSETTK</sequence>
<reference key="1">
    <citation type="journal article" date="2008" name="PLoS ONE">
        <title>Genome sequence of the saprophyte Leptospira biflexa provides insights into the evolution of Leptospira and the pathogenesis of leptospirosis.</title>
        <authorList>
            <person name="Picardeau M."/>
            <person name="Bulach D.M."/>
            <person name="Bouchier C."/>
            <person name="Zuerner R.L."/>
            <person name="Zidane N."/>
            <person name="Wilson P.J."/>
            <person name="Creno S."/>
            <person name="Kuczek E.S."/>
            <person name="Bommezzadri S."/>
            <person name="Davis J.C."/>
            <person name="McGrath A."/>
            <person name="Johnson M.J."/>
            <person name="Boursaux-Eude C."/>
            <person name="Seemann T."/>
            <person name="Rouy Z."/>
            <person name="Coppel R.L."/>
            <person name="Rood J.I."/>
            <person name="Lajus A."/>
            <person name="Davies J.K."/>
            <person name="Medigue C."/>
            <person name="Adler B."/>
        </authorList>
    </citation>
    <scope>NUCLEOTIDE SEQUENCE [LARGE SCALE GENOMIC DNA]</scope>
    <source>
        <strain>Patoc 1 / Ames</strain>
    </source>
</reference>
<comment type="function">
    <text evidence="1">Specifically methylates position 2 of adenine 2503 in 23S rRNA and position 2 of adenine 37 in tRNAs.</text>
</comment>
<comment type="catalytic activity">
    <reaction evidence="1">
        <text>adenosine(2503) in 23S rRNA + 2 reduced [2Fe-2S]-[ferredoxin] + 2 S-adenosyl-L-methionine = 2-methyladenosine(2503) in 23S rRNA + 5'-deoxyadenosine + L-methionine + 2 oxidized [2Fe-2S]-[ferredoxin] + S-adenosyl-L-homocysteine</text>
        <dbReference type="Rhea" id="RHEA:42916"/>
        <dbReference type="Rhea" id="RHEA-COMP:10000"/>
        <dbReference type="Rhea" id="RHEA-COMP:10001"/>
        <dbReference type="Rhea" id="RHEA-COMP:10152"/>
        <dbReference type="Rhea" id="RHEA-COMP:10282"/>
        <dbReference type="ChEBI" id="CHEBI:17319"/>
        <dbReference type="ChEBI" id="CHEBI:33737"/>
        <dbReference type="ChEBI" id="CHEBI:33738"/>
        <dbReference type="ChEBI" id="CHEBI:57844"/>
        <dbReference type="ChEBI" id="CHEBI:57856"/>
        <dbReference type="ChEBI" id="CHEBI:59789"/>
        <dbReference type="ChEBI" id="CHEBI:74411"/>
        <dbReference type="ChEBI" id="CHEBI:74497"/>
        <dbReference type="EC" id="2.1.1.192"/>
    </reaction>
</comment>
<comment type="catalytic activity">
    <reaction evidence="1">
        <text>adenosine(37) in tRNA + 2 reduced [2Fe-2S]-[ferredoxin] + 2 S-adenosyl-L-methionine = 2-methyladenosine(37) in tRNA + 5'-deoxyadenosine + L-methionine + 2 oxidized [2Fe-2S]-[ferredoxin] + S-adenosyl-L-homocysteine</text>
        <dbReference type="Rhea" id="RHEA:43332"/>
        <dbReference type="Rhea" id="RHEA-COMP:10000"/>
        <dbReference type="Rhea" id="RHEA-COMP:10001"/>
        <dbReference type="Rhea" id="RHEA-COMP:10162"/>
        <dbReference type="Rhea" id="RHEA-COMP:10485"/>
        <dbReference type="ChEBI" id="CHEBI:17319"/>
        <dbReference type="ChEBI" id="CHEBI:33737"/>
        <dbReference type="ChEBI" id="CHEBI:33738"/>
        <dbReference type="ChEBI" id="CHEBI:57844"/>
        <dbReference type="ChEBI" id="CHEBI:57856"/>
        <dbReference type="ChEBI" id="CHEBI:59789"/>
        <dbReference type="ChEBI" id="CHEBI:74411"/>
        <dbReference type="ChEBI" id="CHEBI:74497"/>
        <dbReference type="EC" id="2.1.1.192"/>
    </reaction>
</comment>
<comment type="cofactor">
    <cofactor evidence="1">
        <name>[4Fe-4S] cluster</name>
        <dbReference type="ChEBI" id="CHEBI:49883"/>
    </cofactor>
    <text evidence="1">Binds 1 [4Fe-4S] cluster. The cluster is coordinated with 3 cysteines and an exchangeable S-adenosyl-L-methionine.</text>
</comment>
<comment type="subcellular location">
    <subcellularLocation>
        <location evidence="1">Cytoplasm</location>
    </subcellularLocation>
</comment>
<comment type="miscellaneous">
    <text evidence="1">Reaction proceeds by a ping-pong mechanism involving intermediate methylation of a conserved cysteine residue.</text>
</comment>
<comment type="similarity">
    <text evidence="1">Belongs to the radical SAM superfamily. RlmN family.</text>
</comment>
<feature type="chain" id="PRO_0000350230" description="Probable dual-specificity RNA methyltransferase RlmN">
    <location>
        <begin position="1"/>
        <end position="353"/>
    </location>
</feature>
<feature type="domain" description="Radical SAM core" evidence="2">
    <location>
        <begin position="103"/>
        <end position="333"/>
    </location>
</feature>
<feature type="active site" description="Proton acceptor" evidence="1">
    <location>
        <position position="95"/>
    </location>
</feature>
<feature type="active site" description="S-methylcysteine intermediate" evidence="1">
    <location>
        <position position="339"/>
    </location>
</feature>
<feature type="binding site" evidence="1">
    <location>
        <position position="117"/>
    </location>
    <ligand>
        <name>[4Fe-4S] cluster</name>
        <dbReference type="ChEBI" id="CHEBI:49883"/>
        <note>4Fe-4S-S-AdoMet</note>
    </ligand>
</feature>
<feature type="binding site" evidence="1">
    <location>
        <position position="121"/>
    </location>
    <ligand>
        <name>[4Fe-4S] cluster</name>
        <dbReference type="ChEBI" id="CHEBI:49883"/>
        <note>4Fe-4S-S-AdoMet</note>
    </ligand>
</feature>
<feature type="binding site" evidence="1">
    <location>
        <position position="124"/>
    </location>
    <ligand>
        <name>[4Fe-4S] cluster</name>
        <dbReference type="ChEBI" id="CHEBI:49883"/>
        <note>4Fe-4S-S-AdoMet</note>
    </ligand>
</feature>
<feature type="binding site" evidence="1">
    <location>
        <begin position="164"/>
        <end position="165"/>
    </location>
    <ligand>
        <name>S-adenosyl-L-methionine</name>
        <dbReference type="ChEBI" id="CHEBI:59789"/>
    </ligand>
</feature>
<feature type="binding site" evidence="1">
    <location>
        <position position="196"/>
    </location>
    <ligand>
        <name>S-adenosyl-L-methionine</name>
        <dbReference type="ChEBI" id="CHEBI:59789"/>
    </ligand>
</feature>
<feature type="binding site" evidence="1">
    <location>
        <begin position="219"/>
        <end position="221"/>
    </location>
    <ligand>
        <name>S-adenosyl-L-methionine</name>
        <dbReference type="ChEBI" id="CHEBI:59789"/>
    </ligand>
</feature>
<feature type="binding site" evidence="1">
    <location>
        <position position="296"/>
    </location>
    <ligand>
        <name>S-adenosyl-L-methionine</name>
        <dbReference type="ChEBI" id="CHEBI:59789"/>
    </ligand>
</feature>
<feature type="disulfide bond" description="(transient)" evidence="1">
    <location>
        <begin position="110"/>
        <end position="339"/>
    </location>
</feature>
<proteinExistence type="inferred from homology"/>
<protein>
    <recommendedName>
        <fullName evidence="1">Probable dual-specificity RNA methyltransferase RlmN</fullName>
        <ecNumber evidence="1">2.1.1.192</ecNumber>
    </recommendedName>
    <alternativeName>
        <fullName evidence="1">23S rRNA (adenine(2503)-C(2))-methyltransferase</fullName>
    </alternativeName>
    <alternativeName>
        <fullName evidence="1">23S rRNA m2A2503 methyltransferase</fullName>
    </alternativeName>
    <alternativeName>
        <fullName evidence="1">Ribosomal RNA large subunit methyltransferase N</fullName>
    </alternativeName>
    <alternativeName>
        <fullName evidence="1">tRNA (adenine(37)-C(2))-methyltransferase</fullName>
    </alternativeName>
    <alternativeName>
        <fullName evidence="1">tRNA m2A37 methyltransferase</fullName>
    </alternativeName>
</protein>
<keyword id="KW-0004">4Fe-4S</keyword>
<keyword id="KW-0963">Cytoplasm</keyword>
<keyword id="KW-1015">Disulfide bond</keyword>
<keyword id="KW-0408">Iron</keyword>
<keyword id="KW-0411">Iron-sulfur</keyword>
<keyword id="KW-0479">Metal-binding</keyword>
<keyword id="KW-0489">Methyltransferase</keyword>
<keyword id="KW-0698">rRNA processing</keyword>
<keyword id="KW-0949">S-adenosyl-L-methionine</keyword>
<keyword id="KW-0808">Transferase</keyword>
<keyword id="KW-0819">tRNA processing</keyword>
<gene>
    <name evidence="1" type="primary">rlmN</name>
    <name type="ordered locus">LBF_1312</name>
</gene>
<name>RLMN_LEPBA</name>
<dbReference type="EC" id="2.1.1.192" evidence="1"/>
<dbReference type="EMBL" id="CP000777">
    <property type="protein sequence ID" value="ABZ93832.1"/>
    <property type="molecule type" value="Genomic_DNA"/>
</dbReference>
<dbReference type="RefSeq" id="WP_012388354.1">
    <property type="nucleotide sequence ID" value="NC_010842.1"/>
</dbReference>
<dbReference type="SMR" id="B0SGA8"/>
<dbReference type="KEGG" id="lbf:LBF_1312"/>
<dbReference type="HOGENOM" id="CLU_029101_0_1_12"/>
<dbReference type="GO" id="GO:0005737">
    <property type="term" value="C:cytoplasm"/>
    <property type="evidence" value="ECO:0007669"/>
    <property type="project" value="UniProtKB-SubCell"/>
</dbReference>
<dbReference type="GO" id="GO:0051539">
    <property type="term" value="F:4 iron, 4 sulfur cluster binding"/>
    <property type="evidence" value="ECO:0007669"/>
    <property type="project" value="UniProtKB-UniRule"/>
</dbReference>
<dbReference type="GO" id="GO:0046872">
    <property type="term" value="F:metal ion binding"/>
    <property type="evidence" value="ECO:0007669"/>
    <property type="project" value="UniProtKB-KW"/>
</dbReference>
<dbReference type="GO" id="GO:0070040">
    <property type="term" value="F:rRNA (adenine(2503)-C2-)-methyltransferase activity"/>
    <property type="evidence" value="ECO:0007669"/>
    <property type="project" value="UniProtKB-UniRule"/>
</dbReference>
<dbReference type="GO" id="GO:0019843">
    <property type="term" value="F:rRNA binding"/>
    <property type="evidence" value="ECO:0007669"/>
    <property type="project" value="UniProtKB-UniRule"/>
</dbReference>
<dbReference type="GO" id="GO:0002935">
    <property type="term" value="F:tRNA (adenine(37)-C2)-methyltransferase activity"/>
    <property type="evidence" value="ECO:0007669"/>
    <property type="project" value="UniProtKB-UniRule"/>
</dbReference>
<dbReference type="GO" id="GO:0000049">
    <property type="term" value="F:tRNA binding"/>
    <property type="evidence" value="ECO:0007669"/>
    <property type="project" value="UniProtKB-UniRule"/>
</dbReference>
<dbReference type="GO" id="GO:0070475">
    <property type="term" value="P:rRNA base methylation"/>
    <property type="evidence" value="ECO:0007669"/>
    <property type="project" value="UniProtKB-UniRule"/>
</dbReference>
<dbReference type="GO" id="GO:0030488">
    <property type="term" value="P:tRNA methylation"/>
    <property type="evidence" value="ECO:0007669"/>
    <property type="project" value="UniProtKB-UniRule"/>
</dbReference>
<dbReference type="CDD" id="cd01335">
    <property type="entry name" value="Radical_SAM"/>
    <property type="match status" value="1"/>
</dbReference>
<dbReference type="Gene3D" id="1.10.150.530">
    <property type="match status" value="1"/>
</dbReference>
<dbReference type="Gene3D" id="3.20.20.70">
    <property type="entry name" value="Aldolase class I"/>
    <property type="match status" value="1"/>
</dbReference>
<dbReference type="HAMAP" id="MF_01849">
    <property type="entry name" value="RNA_methyltr_RlmN"/>
    <property type="match status" value="1"/>
</dbReference>
<dbReference type="InterPro" id="IPR013785">
    <property type="entry name" value="Aldolase_TIM"/>
</dbReference>
<dbReference type="InterPro" id="IPR040072">
    <property type="entry name" value="Methyltransferase_A"/>
</dbReference>
<dbReference type="InterPro" id="IPR048641">
    <property type="entry name" value="RlmN_N"/>
</dbReference>
<dbReference type="InterPro" id="IPR027492">
    <property type="entry name" value="RNA_MTrfase_RlmN"/>
</dbReference>
<dbReference type="InterPro" id="IPR004383">
    <property type="entry name" value="rRNA_lsu_MTrfase_RlmN/Cfr"/>
</dbReference>
<dbReference type="InterPro" id="IPR007197">
    <property type="entry name" value="rSAM"/>
</dbReference>
<dbReference type="PANTHER" id="PTHR30544">
    <property type="entry name" value="23S RRNA METHYLTRANSFERASE"/>
    <property type="match status" value="1"/>
</dbReference>
<dbReference type="PANTHER" id="PTHR30544:SF5">
    <property type="entry name" value="RADICAL SAM CORE DOMAIN-CONTAINING PROTEIN"/>
    <property type="match status" value="1"/>
</dbReference>
<dbReference type="Pfam" id="PF04055">
    <property type="entry name" value="Radical_SAM"/>
    <property type="match status" value="1"/>
</dbReference>
<dbReference type="Pfam" id="PF21016">
    <property type="entry name" value="RlmN_N"/>
    <property type="match status" value="1"/>
</dbReference>
<dbReference type="PIRSF" id="PIRSF006004">
    <property type="entry name" value="CHP00048"/>
    <property type="match status" value="1"/>
</dbReference>
<dbReference type="SFLD" id="SFLDF00275">
    <property type="entry name" value="adenosine_C2_methyltransferase"/>
    <property type="match status" value="1"/>
</dbReference>
<dbReference type="SFLD" id="SFLDS00029">
    <property type="entry name" value="Radical_SAM"/>
    <property type="match status" value="1"/>
</dbReference>
<dbReference type="SUPFAM" id="SSF102114">
    <property type="entry name" value="Radical SAM enzymes"/>
    <property type="match status" value="1"/>
</dbReference>
<dbReference type="PROSITE" id="PS51918">
    <property type="entry name" value="RADICAL_SAM"/>
    <property type="match status" value="1"/>
</dbReference>
<organism>
    <name type="scientific">Leptospira biflexa serovar Patoc (strain Patoc 1 / Ames)</name>
    <dbReference type="NCBI Taxonomy" id="355278"/>
    <lineage>
        <taxon>Bacteria</taxon>
        <taxon>Pseudomonadati</taxon>
        <taxon>Spirochaetota</taxon>
        <taxon>Spirochaetia</taxon>
        <taxon>Leptospirales</taxon>
        <taxon>Leptospiraceae</taxon>
        <taxon>Leptospira</taxon>
    </lineage>
</organism>
<accession>B0SGA8</accession>